<keyword id="KW-1185">Reference proteome</keyword>
<keyword id="KW-0687">Ribonucleoprotein</keyword>
<keyword id="KW-0689">Ribosomal protein</keyword>
<keyword id="KW-0694">RNA-binding</keyword>
<keyword id="KW-0699">rRNA-binding</keyword>
<reference key="1">
    <citation type="submission" date="2004-12" db="EMBL/GenBank/DDBJ databases">
        <title>The genome sequence of Borrelia hermsii and Borrelia turicatae: comparative analysis of two agents of endemic N. America relapsing fever.</title>
        <authorList>
            <person name="Porcella S.F."/>
            <person name="Raffel S.J."/>
            <person name="Schrumpf M.E."/>
            <person name="Montgomery B."/>
            <person name="Smith T."/>
            <person name="Schwan T.G."/>
        </authorList>
    </citation>
    <scope>NUCLEOTIDE SEQUENCE [LARGE SCALE GENOMIC DNA]</scope>
    <source>
        <strain>91E135</strain>
    </source>
</reference>
<comment type="function">
    <text evidence="1">Binds the lower part of the 30S subunit head. Binds mRNA in the 70S ribosome, positioning it for translation.</text>
</comment>
<comment type="subunit">
    <text evidence="1">Part of the 30S ribosomal subunit. Forms a tight complex with proteins S10 and S14.</text>
</comment>
<comment type="similarity">
    <text evidence="1">Belongs to the universal ribosomal protein uS3 family.</text>
</comment>
<proteinExistence type="inferred from homology"/>
<sequence>MGQKVHPYSLRIKINRDWKSKWYFDKKLYSEILHEDFLIRRETMKFLKGIRFDISDIEIIRNNLQRVTVIISTPRPGSVIGVKGANLEKIGQLLTRKISKKINIKIKEIKKPEFDAQIVANGIAKQLENRASYRKLLKSSLLSSISKGVQGVKIKVSGRLGGAEIARSFEVKEGRIPLHTLRANIDYGFAEAQTTYGVIGVKVWLFKGEVLGKQTNSDAGQVINKKTSREKSEYFDKNRVDDKSKKVVNDDKFSRKKLEFGSKSNSSFKKKNGSDV</sequence>
<feature type="chain" id="PRO_1000165479" description="Small ribosomal subunit protein uS3">
    <location>
        <begin position="1"/>
        <end position="276"/>
    </location>
</feature>
<feature type="domain" description="KH type-2" evidence="1">
    <location>
        <begin position="39"/>
        <end position="110"/>
    </location>
</feature>
<protein>
    <recommendedName>
        <fullName evidence="1">Small ribosomal subunit protein uS3</fullName>
    </recommendedName>
    <alternativeName>
        <fullName evidence="2">30S ribosomal protein S3</fullName>
    </alternativeName>
</protein>
<name>RS3_BORT9</name>
<organism>
    <name type="scientific">Borrelia turicatae (strain 91E135)</name>
    <dbReference type="NCBI Taxonomy" id="314724"/>
    <lineage>
        <taxon>Bacteria</taxon>
        <taxon>Pseudomonadati</taxon>
        <taxon>Spirochaetota</taxon>
        <taxon>Spirochaetia</taxon>
        <taxon>Spirochaetales</taxon>
        <taxon>Borreliaceae</taxon>
        <taxon>Borrelia</taxon>
    </lineage>
</organism>
<gene>
    <name evidence="1" type="primary">rpsC</name>
    <name type="ordered locus">BT0484</name>
</gene>
<evidence type="ECO:0000255" key="1">
    <source>
        <dbReference type="HAMAP-Rule" id="MF_01309"/>
    </source>
</evidence>
<evidence type="ECO:0000305" key="2"/>
<dbReference type="EMBL" id="CP000049">
    <property type="protein sequence ID" value="AAX17812.1"/>
    <property type="molecule type" value="Genomic_DNA"/>
</dbReference>
<dbReference type="RefSeq" id="WP_011772431.1">
    <property type="nucleotide sequence ID" value="NC_008710.1"/>
</dbReference>
<dbReference type="SMR" id="A1QZS0"/>
<dbReference type="KEGG" id="btu:BT0484"/>
<dbReference type="eggNOG" id="COG0092">
    <property type="taxonomic scope" value="Bacteria"/>
</dbReference>
<dbReference type="HOGENOM" id="CLU_058591_0_2_12"/>
<dbReference type="Proteomes" id="UP000001205">
    <property type="component" value="Chromosome"/>
</dbReference>
<dbReference type="GO" id="GO:0022627">
    <property type="term" value="C:cytosolic small ribosomal subunit"/>
    <property type="evidence" value="ECO:0007669"/>
    <property type="project" value="TreeGrafter"/>
</dbReference>
<dbReference type="GO" id="GO:0003729">
    <property type="term" value="F:mRNA binding"/>
    <property type="evidence" value="ECO:0007669"/>
    <property type="project" value="UniProtKB-UniRule"/>
</dbReference>
<dbReference type="GO" id="GO:0019843">
    <property type="term" value="F:rRNA binding"/>
    <property type="evidence" value="ECO:0007669"/>
    <property type="project" value="UniProtKB-UniRule"/>
</dbReference>
<dbReference type="GO" id="GO:0003735">
    <property type="term" value="F:structural constituent of ribosome"/>
    <property type="evidence" value="ECO:0007669"/>
    <property type="project" value="InterPro"/>
</dbReference>
<dbReference type="GO" id="GO:0006412">
    <property type="term" value="P:translation"/>
    <property type="evidence" value="ECO:0007669"/>
    <property type="project" value="UniProtKB-UniRule"/>
</dbReference>
<dbReference type="CDD" id="cd02412">
    <property type="entry name" value="KH-II_30S_S3"/>
    <property type="match status" value="1"/>
</dbReference>
<dbReference type="FunFam" id="3.30.300.20:FF:000001">
    <property type="entry name" value="30S ribosomal protein S3"/>
    <property type="match status" value="1"/>
</dbReference>
<dbReference type="Gene3D" id="3.30.300.20">
    <property type="match status" value="1"/>
</dbReference>
<dbReference type="Gene3D" id="3.30.1140.32">
    <property type="entry name" value="Ribosomal protein S3, C-terminal domain"/>
    <property type="match status" value="1"/>
</dbReference>
<dbReference type="HAMAP" id="MF_01309_B">
    <property type="entry name" value="Ribosomal_uS3_B"/>
    <property type="match status" value="1"/>
</dbReference>
<dbReference type="InterPro" id="IPR004087">
    <property type="entry name" value="KH_dom"/>
</dbReference>
<dbReference type="InterPro" id="IPR015946">
    <property type="entry name" value="KH_dom-like_a/b"/>
</dbReference>
<dbReference type="InterPro" id="IPR004044">
    <property type="entry name" value="KH_dom_type_2"/>
</dbReference>
<dbReference type="InterPro" id="IPR009019">
    <property type="entry name" value="KH_sf_prok-type"/>
</dbReference>
<dbReference type="InterPro" id="IPR036419">
    <property type="entry name" value="Ribosomal_S3_C_sf"/>
</dbReference>
<dbReference type="InterPro" id="IPR005704">
    <property type="entry name" value="Ribosomal_uS3_bac-typ"/>
</dbReference>
<dbReference type="InterPro" id="IPR001351">
    <property type="entry name" value="Ribosomal_uS3_C"/>
</dbReference>
<dbReference type="InterPro" id="IPR018280">
    <property type="entry name" value="Ribosomal_uS3_CS"/>
</dbReference>
<dbReference type="NCBIfam" id="TIGR01009">
    <property type="entry name" value="rpsC_bact"/>
    <property type="match status" value="1"/>
</dbReference>
<dbReference type="PANTHER" id="PTHR11760">
    <property type="entry name" value="30S/40S RIBOSOMAL PROTEIN S3"/>
    <property type="match status" value="1"/>
</dbReference>
<dbReference type="PANTHER" id="PTHR11760:SF19">
    <property type="entry name" value="SMALL RIBOSOMAL SUBUNIT PROTEIN US3C"/>
    <property type="match status" value="1"/>
</dbReference>
<dbReference type="Pfam" id="PF07650">
    <property type="entry name" value="KH_2"/>
    <property type="match status" value="1"/>
</dbReference>
<dbReference type="Pfam" id="PF00189">
    <property type="entry name" value="Ribosomal_S3_C"/>
    <property type="match status" value="1"/>
</dbReference>
<dbReference type="SMART" id="SM00322">
    <property type="entry name" value="KH"/>
    <property type="match status" value="1"/>
</dbReference>
<dbReference type="SUPFAM" id="SSF54814">
    <property type="entry name" value="Prokaryotic type KH domain (KH-domain type II)"/>
    <property type="match status" value="1"/>
</dbReference>
<dbReference type="SUPFAM" id="SSF54821">
    <property type="entry name" value="Ribosomal protein S3 C-terminal domain"/>
    <property type="match status" value="1"/>
</dbReference>
<dbReference type="PROSITE" id="PS50823">
    <property type="entry name" value="KH_TYPE_2"/>
    <property type="match status" value="1"/>
</dbReference>
<dbReference type="PROSITE" id="PS00548">
    <property type="entry name" value="RIBOSOMAL_S3"/>
    <property type="match status" value="1"/>
</dbReference>
<accession>A1QZS0</accession>